<proteinExistence type="inferred from homology"/>
<accession>Q6D0G5</accession>
<gene>
    <name evidence="1" type="primary">leuD</name>
    <name type="ordered locus">ECA3834</name>
</gene>
<evidence type="ECO:0000255" key="1">
    <source>
        <dbReference type="HAMAP-Rule" id="MF_01031"/>
    </source>
</evidence>
<protein>
    <recommendedName>
        <fullName evidence="1">3-isopropylmalate dehydratase small subunit</fullName>
        <ecNumber evidence="1">4.2.1.33</ecNumber>
    </recommendedName>
    <alternativeName>
        <fullName evidence="1">Alpha-IPM isomerase</fullName>
        <shortName evidence="1">IPMI</shortName>
    </alternativeName>
    <alternativeName>
        <fullName evidence="1">Isopropylmalate isomerase</fullName>
    </alternativeName>
</protein>
<organism>
    <name type="scientific">Pectobacterium atrosepticum (strain SCRI 1043 / ATCC BAA-672)</name>
    <name type="common">Erwinia carotovora subsp. atroseptica</name>
    <dbReference type="NCBI Taxonomy" id="218491"/>
    <lineage>
        <taxon>Bacteria</taxon>
        <taxon>Pseudomonadati</taxon>
        <taxon>Pseudomonadota</taxon>
        <taxon>Gammaproteobacteria</taxon>
        <taxon>Enterobacterales</taxon>
        <taxon>Pectobacteriaceae</taxon>
        <taxon>Pectobacterium</taxon>
    </lineage>
</organism>
<sequence>MAKFTQHTGLVVPLDAANVDTDAIIPKQFLQKVTRTGFGQHLFHDWRFLDDAGQQPNPEFVLNKPHYKGASILLARENFGCGSSREHAPWALTDYGFSVVIAPSFADIFYGNSFNNQLLPVKLSDEEVDELFKLVDEQEGITFTVDLENQVVQADSKRYPFEIDSFRRHCMINGLDSIGLTLQHEASITEYEKNQPAFLN</sequence>
<reference key="1">
    <citation type="journal article" date="2004" name="Proc. Natl. Acad. Sci. U.S.A.">
        <title>Genome sequence of the enterobacterial phytopathogen Erwinia carotovora subsp. atroseptica and characterization of virulence factors.</title>
        <authorList>
            <person name="Bell K.S."/>
            <person name="Sebaihia M."/>
            <person name="Pritchard L."/>
            <person name="Holden M.T.G."/>
            <person name="Hyman L.J."/>
            <person name="Holeva M.C."/>
            <person name="Thomson N.R."/>
            <person name="Bentley S.D."/>
            <person name="Churcher L.J.C."/>
            <person name="Mungall K."/>
            <person name="Atkin R."/>
            <person name="Bason N."/>
            <person name="Brooks K."/>
            <person name="Chillingworth T."/>
            <person name="Clark K."/>
            <person name="Doggett J."/>
            <person name="Fraser A."/>
            <person name="Hance Z."/>
            <person name="Hauser H."/>
            <person name="Jagels K."/>
            <person name="Moule S."/>
            <person name="Norbertczak H."/>
            <person name="Ormond D."/>
            <person name="Price C."/>
            <person name="Quail M.A."/>
            <person name="Sanders M."/>
            <person name="Walker D."/>
            <person name="Whitehead S."/>
            <person name="Salmond G.P.C."/>
            <person name="Birch P.R.J."/>
            <person name="Parkhill J."/>
            <person name="Toth I.K."/>
        </authorList>
    </citation>
    <scope>NUCLEOTIDE SEQUENCE [LARGE SCALE GENOMIC DNA]</scope>
    <source>
        <strain>SCRI 1043 / ATCC BAA-672</strain>
    </source>
</reference>
<comment type="function">
    <text evidence="1">Catalyzes the isomerization between 2-isopropylmalate and 3-isopropylmalate, via the formation of 2-isopropylmaleate.</text>
</comment>
<comment type="catalytic activity">
    <reaction evidence="1">
        <text>(2R,3S)-3-isopropylmalate = (2S)-2-isopropylmalate</text>
        <dbReference type="Rhea" id="RHEA:32287"/>
        <dbReference type="ChEBI" id="CHEBI:1178"/>
        <dbReference type="ChEBI" id="CHEBI:35121"/>
        <dbReference type="EC" id="4.2.1.33"/>
    </reaction>
</comment>
<comment type="pathway">
    <text evidence="1">Amino-acid biosynthesis; L-leucine biosynthesis; L-leucine from 3-methyl-2-oxobutanoate: step 2/4.</text>
</comment>
<comment type="subunit">
    <text evidence="1">Heterodimer of LeuC and LeuD.</text>
</comment>
<comment type="similarity">
    <text evidence="1">Belongs to the LeuD family. LeuD type 1 subfamily.</text>
</comment>
<keyword id="KW-0028">Amino-acid biosynthesis</keyword>
<keyword id="KW-0100">Branched-chain amino acid biosynthesis</keyword>
<keyword id="KW-0432">Leucine biosynthesis</keyword>
<keyword id="KW-0456">Lyase</keyword>
<keyword id="KW-1185">Reference proteome</keyword>
<feature type="chain" id="PRO_0000141818" description="3-isopropylmalate dehydratase small subunit">
    <location>
        <begin position="1"/>
        <end position="200"/>
    </location>
</feature>
<name>LEUD_PECAS</name>
<dbReference type="EC" id="4.2.1.33" evidence="1"/>
<dbReference type="EMBL" id="BX950851">
    <property type="protein sequence ID" value="CAG76732.1"/>
    <property type="molecule type" value="Genomic_DNA"/>
</dbReference>
<dbReference type="RefSeq" id="WP_011095332.1">
    <property type="nucleotide sequence ID" value="NC_004547.2"/>
</dbReference>
<dbReference type="SMR" id="Q6D0G5"/>
<dbReference type="STRING" id="218491.ECA3834"/>
<dbReference type="KEGG" id="eca:ECA3834"/>
<dbReference type="PATRIC" id="fig|218491.5.peg.3889"/>
<dbReference type="eggNOG" id="COG0066">
    <property type="taxonomic scope" value="Bacteria"/>
</dbReference>
<dbReference type="HOGENOM" id="CLU_081378_0_3_6"/>
<dbReference type="OrthoDB" id="9777465at2"/>
<dbReference type="UniPathway" id="UPA00048">
    <property type="reaction ID" value="UER00071"/>
</dbReference>
<dbReference type="Proteomes" id="UP000007966">
    <property type="component" value="Chromosome"/>
</dbReference>
<dbReference type="GO" id="GO:0009316">
    <property type="term" value="C:3-isopropylmalate dehydratase complex"/>
    <property type="evidence" value="ECO:0007669"/>
    <property type="project" value="InterPro"/>
</dbReference>
<dbReference type="GO" id="GO:0003861">
    <property type="term" value="F:3-isopropylmalate dehydratase activity"/>
    <property type="evidence" value="ECO:0007669"/>
    <property type="project" value="UniProtKB-UniRule"/>
</dbReference>
<dbReference type="GO" id="GO:0009098">
    <property type="term" value="P:L-leucine biosynthetic process"/>
    <property type="evidence" value="ECO:0007669"/>
    <property type="project" value="UniProtKB-UniRule"/>
</dbReference>
<dbReference type="CDD" id="cd01577">
    <property type="entry name" value="IPMI_Swivel"/>
    <property type="match status" value="1"/>
</dbReference>
<dbReference type="FunFam" id="3.20.19.10:FF:000003">
    <property type="entry name" value="3-isopropylmalate dehydratase small subunit"/>
    <property type="match status" value="1"/>
</dbReference>
<dbReference type="Gene3D" id="3.20.19.10">
    <property type="entry name" value="Aconitase, domain 4"/>
    <property type="match status" value="1"/>
</dbReference>
<dbReference type="HAMAP" id="MF_01031">
    <property type="entry name" value="LeuD_type1"/>
    <property type="match status" value="1"/>
</dbReference>
<dbReference type="InterPro" id="IPR004431">
    <property type="entry name" value="3-IsopropMal_deHydase_ssu"/>
</dbReference>
<dbReference type="InterPro" id="IPR015928">
    <property type="entry name" value="Aconitase/3IPM_dehydase_swvl"/>
</dbReference>
<dbReference type="InterPro" id="IPR000573">
    <property type="entry name" value="AconitaseA/IPMdHydase_ssu_swvl"/>
</dbReference>
<dbReference type="InterPro" id="IPR033940">
    <property type="entry name" value="IPMI_Swivel"/>
</dbReference>
<dbReference type="InterPro" id="IPR050075">
    <property type="entry name" value="LeuD"/>
</dbReference>
<dbReference type="NCBIfam" id="TIGR00171">
    <property type="entry name" value="leuD"/>
    <property type="match status" value="1"/>
</dbReference>
<dbReference type="NCBIfam" id="NF002458">
    <property type="entry name" value="PRK01641.1"/>
    <property type="match status" value="1"/>
</dbReference>
<dbReference type="PANTHER" id="PTHR43345:SF5">
    <property type="entry name" value="3-ISOPROPYLMALATE DEHYDRATASE SMALL SUBUNIT"/>
    <property type="match status" value="1"/>
</dbReference>
<dbReference type="PANTHER" id="PTHR43345">
    <property type="entry name" value="3-ISOPROPYLMALATE DEHYDRATASE SMALL SUBUNIT 2-RELATED-RELATED"/>
    <property type="match status" value="1"/>
</dbReference>
<dbReference type="Pfam" id="PF00694">
    <property type="entry name" value="Aconitase_C"/>
    <property type="match status" value="1"/>
</dbReference>
<dbReference type="SUPFAM" id="SSF52016">
    <property type="entry name" value="LeuD/IlvD-like"/>
    <property type="match status" value="1"/>
</dbReference>